<proteinExistence type="inferred from homology"/>
<accession>Q1JP60</accession>
<comment type="function">
    <text evidence="1">Plays an essential role in the initiation and regulation of chromosomal replication. ATP-DnaA binds to the origin of replication (oriC) to initiate formation of the DNA replication initiation complex once per cell cycle. Binds the DnaA box (a 9 base pair repeat at the origin) and separates the double-stranded (ds)DNA. Forms a right-handed helical filament on oriC DNA; dsDNA binds to the exterior of the filament while single-stranded (ss)DNA is stabiized in the filament's interior. The ATP-DnaA-oriC complex binds and stabilizes one strand of the AT-rich DNA unwinding element (DUE), permitting loading of DNA polymerase. After initiation quickly degrades to an ADP-DnaA complex that is not apt for DNA replication. Binds acidic phospholipids.</text>
</comment>
<comment type="subunit">
    <text evidence="1">Oligomerizes as a right-handed, spiral filament on DNA at oriC.</text>
</comment>
<comment type="subcellular location">
    <subcellularLocation>
        <location evidence="1">Cytoplasm</location>
    </subcellularLocation>
</comment>
<comment type="domain">
    <text evidence="1">Domain I is involved in oligomerization and binding regulators, domain II is flexibile and of varying length in different bacteria, domain III forms the AAA+ region, while domain IV binds dsDNA.</text>
</comment>
<comment type="similarity">
    <text evidence="1">Belongs to the DnaA family.</text>
</comment>
<evidence type="ECO:0000255" key="1">
    <source>
        <dbReference type="HAMAP-Rule" id="MF_00377"/>
    </source>
</evidence>
<keyword id="KW-0067">ATP-binding</keyword>
<keyword id="KW-0963">Cytoplasm</keyword>
<keyword id="KW-0235">DNA replication</keyword>
<keyword id="KW-0238">DNA-binding</keyword>
<keyword id="KW-0446">Lipid-binding</keyword>
<keyword id="KW-0547">Nucleotide-binding</keyword>
<reference key="1">
    <citation type="journal article" date="2006" name="Proc. Natl. Acad. Sci. U.S.A.">
        <title>Molecular genetic anatomy of inter- and intraserotype variation in the human bacterial pathogen group A Streptococcus.</title>
        <authorList>
            <person name="Beres S.B."/>
            <person name="Richter E.W."/>
            <person name="Nagiec M.J."/>
            <person name="Sumby P."/>
            <person name="Porcella S.F."/>
            <person name="DeLeo F.R."/>
            <person name="Musser J.M."/>
        </authorList>
    </citation>
    <scope>NUCLEOTIDE SEQUENCE [LARGE SCALE GENOMIC DNA]</scope>
    <source>
        <strain>MGAS9429</strain>
    </source>
</reference>
<gene>
    <name evidence="1" type="primary">dnaA</name>
    <name type="ordered locus">MGAS9429_Spy0001</name>
</gene>
<protein>
    <recommendedName>
        <fullName evidence="1">Chromosomal replication initiator protein DnaA</fullName>
    </recommendedName>
</protein>
<feature type="chain" id="PRO_1000048740" description="Chromosomal replication initiator protein DnaA">
    <location>
        <begin position="1"/>
        <end position="451"/>
    </location>
</feature>
<feature type="region of interest" description="Domain I, interacts with DnaA modulators" evidence="1">
    <location>
        <begin position="1"/>
        <end position="77"/>
    </location>
</feature>
<feature type="region of interest" description="Domain II" evidence="1">
    <location>
        <begin position="77"/>
        <end position="110"/>
    </location>
</feature>
<feature type="region of interest" description="Domain III, AAA+ region" evidence="1">
    <location>
        <begin position="111"/>
        <end position="329"/>
    </location>
</feature>
<feature type="region of interest" description="Domain IV, binds dsDNA" evidence="1">
    <location>
        <begin position="330"/>
        <end position="451"/>
    </location>
</feature>
<feature type="binding site" evidence="1">
    <location>
        <position position="155"/>
    </location>
    <ligand>
        <name>ATP</name>
        <dbReference type="ChEBI" id="CHEBI:30616"/>
    </ligand>
</feature>
<feature type="binding site" evidence="1">
    <location>
        <position position="157"/>
    </location>
    <ligand>
        <name>ATP</name>
        <dbReference type="ChEBI" id="CHEBI:30616"/>
    </ligand>
</feature>
<feature type="binding site" evidence="1">
    <location>
        <position position="158"/>
    </location>
    <ligand>
        <name>ATP</name>
        <dbReference type="ChEBI" id="CHEBI:30616"/>
    </ligand>
</feature>
<feature type="binding site" evidence="1">
    <location>
        <position position="159"/>
    </location>
    <ligand>
        <name>ATP</name>
        <dbReference type="ChEBI" id="CHEBI:30616"/>
    </ligand>
</feature>
<sequence length="451" mass="51665">MTENEQIFWNRVLELAQSQLKQATYEFFVHDARLLKVDKHIATIYLDQMKELFWEKNLKDVILTAGFEVYNAQISVDYVFEEDLMIEQNQTKINQKPKQQALNSLPTVTSDLNSKYSFENFIQGDENRWAVAASIAVANTPGTTYNPLFIWGGPGLGKTHLLNAIGNSVLLENPNARIKYITAENFINEFVIHIRLDTMDELKEKFRNLDLLLIDDIQSLAKKTLSGTQEEFFNTFNALHNNNKQIVLTSDRTPDHLNDLEDRLVTRFKWGLTVNITPPDFETRVAILTNKIQEYNFIFPQDTIEYLAGQFDSNVRDLEGALKDISLVANFKQIDTITVDIAAEAIRARKQDGPKMTVIPIEEIQAQVGKFYGVTVKEIKATKRTQNIVLARQVAMFLAREMTDNSLPKIGKEFGGRDHSTVLHAYNKIKNMISQDESLRIEIETIKNKIK</sequence>
<organism>
    <name type="scientific">Streptococcus pyogenes serotype M12 (strain MGAS9429)</name>
    <dbReference type="NCBI Taxonomy" id="370551"/>
    <lineage>
        <taxon>Bacteria</taxon>
        <taxon>Bacillati</taxon>
        <taxon>Bacillota</taxon>
        <taxon>Bacilli</taxon>
        <taxon>Lactobacillales</taxon>
        <taxon>Streptococcaceae</taxon>
        <taxon>Streptococcus</taxon>
    </lineage>
</organism>
<name>DNAA_STRPC</name>
<dbReference type="EMBL" id="CP000259">
    <property type="protein sequence ID" value="ABF31189.1"/>
    <property type="molecule type" value="Genomic_DNA"/>
</dbReference>
<dbReference type="RefSeq" id="WP_002987659.1">
    <property type="nucleotide sequence ID" value="NC_008021.1"/>
</dbReference>
<dbReference type="SMR" id="Q1JP60"/>
<dbReference type="GeneID" id="69899953"/>
<dbReference type="KEGG" id="spk:MGAS9429_Spy0001"/>
<dbReference type="HOGENOM" id="CLU_026910_3_2_9"/>
<dbReference type="Proteomes" id="UP000002433">
    <property type="component" value="Chromosome"/>
</dbReference>
<dbReference type="GO" id="GO:0005737">
    <property type="term" value="C:cytoplasm"/>
    <property type="evidence" value="ECO:0007669"/>
    <property type="project" value="UniProtKB-SubCell"/>
</dbReference>
<dbReference type="GO" id="GO:0005886">
    <property type="term" value="C:plasma membrane"/>
    <property type="evidence" value="ECO:0007669"/>
    <property type="project" value="TreeGrafter"/>
</dbReference>
<dbReference type="GO" id="GO:0005524">
    <property type="term" value="F:ATP binding"/>
    <property type="evidence" value="ECO:0007669"/>
    <property type="project" value="UniProtKB-UniRule"/>
</dbReference>
<dbReference type="GO" id="GO:0016887">
    <property type="term" value="F:ATP hydrolysis activity"/>
    <property type="evidence" value="ECO:0007669"/>
    <property type="project" value="InterPro"/>
</dbReference>
<dbReference type="GO" id="GO:0003688">
    <property type="term" value="F:DNA replication origin binding"/>
    <property type="evidence" value="ECO:0007669"/>
    <property type="project" value="UniProtKB-UniRule"/>
</dbReference>
<dbReference type="GO" id="GO:0008289">
    <property type="term" value="F:lipid binding"/>
    <property type="evidence" value="ECO:0007669"/>
    <property type="project" value="UniProtKB-KW"/>
</dbReference>
<dbReference type="GO" id="GO:0006270">
    <property type="term" value="P:DNA replication initiation"/>
    <property type="evidence" value="ECO:0007669"/>
    <property type="project" value="UniProtKB-UniRule"/>
</dbReference>
<dbReference type="GO" id="GO:0006275">
    <property type="term" value="P:regulation of DNA replication"/>
    <property type="evidence" value="ECO:0007669"/>
    <property type="project" value="UniProtKB-UniRule"/>
</dbReference>
<dbReference type="CDD" id="cd00009">
    <property type="entry name" value="AAA"/>
    <property type="match status" value="1"/>
</dbReference>
<dbReference type="CDD" id="cd06571">
    <property type="entry name" value="Bac_DnaA_C"/>
    <property type="match status" value="1"/>
</dbReference>
<dbReference type="FunFam" id="1.10.1750.10:FF:000002">
    <property type="entry name" value="Chromosomal replication initiator protein DnaA"/>
    <property type="match status" value="1"/>
</dbReference>
<dbReference type="FunFam" id="3.40.50.300:FF:000668">
    <property type="entry name" value="Chromosomal replication initiator protein DnaA"/>
    <property type="match status" value="1"/>
</dbReference>
<dbReference type="Gene3D" id="1.10.1750.10">
    <property type="match status" value="1"/>
</dbReference>
<dbReference type="Gene3D" id="1.10.8.60">
    <property type="match status" value="1"/>
</dbReference>
<dbReference type="Gene3D" id="3.40.50.300">
    <property type="entry name" value="P-loop containing nucleotide triphosphate hydrolases"/>
    <property type="match status" value="1"/>
</dbReference>
<dbReference type="HAMAP" id="MF_00377">
    <property type="entry name" value="DnaA_bact"/>
    <property type="match status" value="1"/>
</dbReference>
<dbReference type="InterPro" id="IPR003593">
    <property type="entry name" value="AAA+_ATPase"/>
</dbReference>
<dbReference type="InterPro" id="IPR001957">
    <property type="entry name" value="Chromosome_initiator_DnaA"/>
</dbReference>
<dbReference type="InterPro" id="IPR020591">
    <property type="entry name" value="Chromosome_initiator_DnaA-like"/>
</dbReference>
<dbReference type="InterPro" id="IPR018312">
    <property type="entry name" value="Chromosome_initiator_DnaA_CS"/>
</dbReference>
<dbReference type="InterPro" id="IPR013159">
    <property type="entry name" value="DnaA_C"/>
</dbReference>
<dbReference type="InterPro" id="IPR013317">
    <property type="entry name" value="DnaA_dom"/>
</dbReference>
<dbReference type="InterPro" id="IPR027417">
    <property type="entry name" value="P-loop_NTPase"/>
</dbReference>
<dbReference type="InterPro" id="IPR010921">
    <property type="entry name" value="Trp_repressor/repl_initiator"/>
</dbReference>
<dbReference type="NCBIfam" id="TIGR00362">
    <property type="entry name" value="DnaA"/>
    <property type="match status" value="1"/>
</dbReference>
<dbReference type="PANTHER" id="PTHR30050">
    <property type="entry name" value="CHROMOSOMAL REPLICATION INITIATOR PROTEIN DNAA"/>
    <property type="match status" value="1"/>
</dbReference>
<dbReference type="PANTHER" id="PTHR30050:SF2">
    <property type="entry name" value="CHROMOSOMAL REPLICATION INITIATOR PROTEIN DNAA"/>
    <property type="match status" value="1"/>
</dbReference>
<dbReference type="Pfam" id="PF00308">
    <property type="entry name" value="Bac_DnaA"/>
    <property type="match status" value="1"/>
</dbReference>
<dbReference type="Pfam" id="PF08299">
    <property type="entry name" value="Bac_DnaA_C"/>
    <property type="match status" value="1"/>
</dbReference>
<dbReference type="PRINTS" id="PR00051">
    <property type="entry name" value="DNAA"/>
</dbReference>
<dbReference type="SMART" id="SM00382">
    <property type="entry name" value="AAA"/>
    <property type="match status" value="1"/>
</dbReference>
<dbReference type="SMART" id="SM00760">
    <property type="entry name" value="Bac_DnaA_C"/>
    <property type="match status" value="1"/>
</dbReference>
<dbReference type="SUPFAM" id="SSF52540">
    <property type="entry name" value="P-loop containing nucleoside triphosphate hydrolases"/>
    <property type="match status" value="1"/>
</dbReference>
<dbReference type="SUPFAM" id="SSF48295">
    <property type="entry name" value="TrpR-like"/>
    <property type="match status" value="1"/>
</dbReference>
<dbReference type="PROSITE" id="PS01008">
    <property type="entry name" value="DNAA"/>
    <property type="match status" value="1"/>
</dbReference>